<proteinExistence type="inferred from homology"/>
<keyword id="KW-0004">4Fe-4S</keyword>
<keyword id="KW-0028">Amino-acid biosynthesis</keyword>
<keyword id="KW-0100">Branched-chain amino acid biosynthesis</keyword>
<keyword id="KW-0408">Iron</keyword>
<keyword id="KW-0411">Iron-sulfur</keyword>
<keyword id="KW-0432">Leucine biosynthesis</keyword>
<keyword id="KW-0456">Lyase</keyword>
<keyword id="KW-0479">Metal-binding</keyword>
<feature type="chain" id="PRO_1000063597" description="3-isopropylmalate dehydratase large subunit">
    <location>
        <begin position="1"/>
        <end position="469"/>
    </location>
</feature>
<feature type="binding site" evidence="1">
    <location>
        <position position="350"/>
    </location>
    <ligand>
        <name>[4Fe-4S] cluster</name>
        <dbReference type="ChEBI" id="CHEBI:49883"/>
    </ligand>
</feature>
<feature type="binding site" evidence="1">
    <location>
        <position position="410"/>
    </location>
    <ligand>
        <name>[4Fe-4S] cluster</name>
        <dbReference type="ChEBI" id="CHEBI:49883"/>
    </ligand>
</feature>
<feature type="binding site" evidence="1">
    <location>
        <position position="413"/>
    </location>
    <ligand>
        <name>[4Fe-4S] cluster</name>
        <dbReference type="ChEBI" id="CHEBI:49883"/>
    </ligand>
</feature>
<sequence>MSAPRTLYDKIWDDHLVDEQADGTCLLYIDRHLVHEVTSPQAFEGLRMTGRKVRAPEKTLAVVDHNVPTSPDRHLGIKNEESRIQVEALATNAAEFGVEYYSASDKRQGIVHIVGPEQGFTLPGMTIVCGDSHTSTHGAFGALAHGIGTSEVEHVLATQTLIQKKAKNMLVRVDGQLPPHVTAKDIILAIIGEIGTAGGTGHVIEFAGEAIRALSMEGRMTVCNMTIEGGARAGLIAPDEKTFEYIKGKPRAPKGEALEQAIAYWKTLQTDEGAHYDRVVVLDAASLPPIVSWGSSPEDVISVQGIVPNPDDIPDETKRTSKWRALDYMGLKPGTKMTDITLDRVFIGSCTNGRIEDLREVAKVVEGKTVAPTVDAMIVPGSGLVKEQAEAEGLDKIFKAAGFDWREPGCSMCLAMNDDRLKPGERCASTSNRNFEGRQGFKGRTHLVSPAMAAAAAIAGHFVDIREWN</sequence>
<evidence type="ECO:0000255" key="1">
    <source>
        <dbReference type="HAMAP-Rule" id="MF_01026"/>
    </source>
</evidence>
<gene>
    <name evidence="1" type="primary">leuC</name>
    <name type="ordered locus">RL4555</name>
</gene>
<name>LEUC_RHIJ3</name>
<reference key="1">
    <citation type="journal article" date="2006" name="Genome Biol.">
        <title>The genome of Rhizobium leguminosarum has recognizable core and accessory components.</title>
        <authorList>
            <person name="Young J.P.W."/>
            <person name="Crossman L.C."/>
            <person name="Johnston A.W.B."/>
            <person name="Thomson N.R."/>
            <person name="Ghazoui Z.F."/>
            <person name="Hull K.H."/>
            <person name="Wexler M."/>
            <person name="Curson A.R.J."/>
            <person name="Todd J.D."/>
            <person name="Poole P.S."/>
            <person name="Mauchline T.H."/>
            <person name="East A.K."/>
            <person name="Quail M.A."/>
            <person name="Churcher C."/>
            <person name="Arrowsmith C."/>
            <person name="Cherevach I."/>
            <person name="Chillingworth T."/>
            <person name="Clarke K."/>
            <person name="Cronin A."/>
            <person name="Davis P."/>
            <person name="Fraser A."/>
            <person name="Hance Z."/>
            <person name="Hauser H."/>
            <person name="Jagels K."/>
            <person name="Moule S."/>
            <person name="Mungall K."/>
            <person name="Norbertczak H."/>
            <person name="Rabbinowitsch E."/>
            <person name="Sanders M."/>
            <person name="Simmonds M."/>
            <person name="Whitehead S."/>
            <person name="Parkhill J."/>
        </authorList>
    </citation>
    <scope>NUCLEOTIDE SEQUENCE [LARGE SCALE GENOMIC DNA]</scope>
    <source>
        <strain>DSM 114642 / LMG 32736 / 3841</strain>
    </source>
</reference>
<accession>Q1MAJ9</accession>
<organism>
    <name type="scientific">Rhizobium johnstonii (strain DSM 114642 / LMG 32736 / 3841)</name>
    <name type="common">Rhizobium leguminosarum bv. viciae</name>
    <dbReference type="NCBI Taxonomy" id="216596"/>
    <lineage>
        <taxon>Bacteria</taxon>
        <taxon>Pseudomonadati</taxon>
        <taxon>Pseudomonadota</taxon>
        <taxon>Alphaproteobacteria</taxon>
        <taxon>Hyphomicrobiales</taxon>
        <taxon>Rhizobiaceae</taxon>
        <taxon>Rhizobium/Agrobacterium group</taxon>
        <taxon>Rhizobium</taxon>
        <taxon>Rhizobium johnstonii</taxon>
    </lineage>
</organism>
<comment type="function">
    <text evidence="1">Catalyzes the isomerization between 2-isopropylmalate and 3-isopropylmalate, via the formation of 2-isopropylmaleate.</text>
</comment>
<comment type="catalytic activity">
    <reaction evidence="1">
        <text>(2R,3S)-3-isopropylmalate = (2S)-2-isopropylmalate</text>
        <dbReference type="Rhea" id="RHEA:32287"/>
        <dbReference type="ChEBI" id="CHEBI:1178"/>
        <dbReference type="ChEBI" id="CHEBI:35121"/>
        <dbReference type="EC" id="4.2.1.33"/>
    </reaction>
</comment>
<comment type="cofactor">
    <cofactor evidence="1">
        <name>[4Fe-4S] cluster</name>
        <dbReference type="ChEBI" id="CHEBI:49883"/>
    </cofactor>
    <text evidence="1">Binds 1 [4Fe-4S] cluster per subunit.</text>
</comment>
<comment type="pathway">
    <text evidence="1">Amino-acid biosynthesis; L-leucine biosynthesis; L-leucine from 3-methyl-2-oxobutanoate: step 2/4.</text>
</comment>
<comment type="subunit">
    <text evidence="1">Heterodimer of LeuC and LeuD.</text>
</comment>
<comment type="similarity">
    <text evidence="1">Belongs to the aconitase/IPM isomerase family. LeuC type 1 subfamily.</text>
</comment>
<dbReference type="EC" id="4.2.1.33" evidence="1"/>
<dbReference type="EMBL" id="AM236080">
    <property type="protein sequence ID" value="CAK10039.1"/>
    <property type="molecule type" value="Genomic_DNA"/>
</dbReference>
<dbReference type="RefSeq" id="WP_011653910.1">
    <property type="nucleotide sequence ID" value="NC_008380.1"/>
</dbReference>
<dbReference type="SMR" id="Q1MAJ9"/>
<dbReference type="EnsemblBacteria" id="CAK10039">
    <property type="protein sequence ID" value="CAK10039"/>
    <property type="gene ID" value="RL4555"/>
</dbReference>
<dbReference type="KEGG" id="rle:RL4555"/>
<dbReference type="eggNOG" id="COG0065">
    <property type="taxonomic scope" value="Bacteria"/>
</dbReference>
<dbReference type="HOGENOM" id="CLU_006714_3_4_5"/>
<dbReference type="UniPathway" id="UPA00048">
    <property type="reaction ID" value="UER00071"/>
</dbReference>
<dbReference type="Proteomes" id="UP000006575">
    <property type="component" value="Chromosome"/>
</dbReference>
<dbReference type="GO" id="GO:0003861">
    <property type="term" value="F:3-isopropylmalate dehydratase activity"/>
    <property type="evidence" value="ECO:0007669"/>
    <property type="project" value="UniProtKB-UniRule"/>
</dbReference>
<dbReference type="GO" id="GO:0051539">
    <property type="term" value="F:4 iron, 4 sulfur cluster binding"/>
    <property type="evidence" value="ECO:0007669"/>
    <property type="project" value="UniProtKB-KW"/>
</dbReference>
<dbReference type="GO" id="GO:0046872">
    <property type="term" value="F:metal ion binding"/>
    <property type="evidence" value="ECO:0007669"/>
    <property type="project" value="UniProtKB-KW"/>
</dbReference>
<dbReference type="GO" id="GO:0009098">
    <property type="term" value="P:L-leucine biosynthetic process"/>
    <property type="evidence" value="ECO:0007669"/>
    <property type="project" value="UniProtKB-UniRule"/>
</dbReference>
<dbReference type="CDD" id="cd01583">
    <property type="entry name" value="IPMI"/>
    <property type="match status" value="1"/>
</dbReference>
<dbReference type="FunFam" id="3.30.499.10:FF:000006">
    <property type="entry name" value="3-isopropylmalate dehydratase large subunit"/>
    <property type="match status" value="1"/>
</dbReference>
<dbReference type="FunFam" id="3.30.499.10:FF:000007">
    <property type="entry name" value="3-isopropylmalate dehydratase large subunit"/>
    <property type="match status" value="1"/>
</dbReference>
<dbReference type="Gene3D" id="3.30.499.10">
    <property type="entry name" value="Aconitase, domain 3"/>
    <property type="match status" value="2"/>
</dbReference>
<dbReference type="HAMAP" id="MF_01026">
    <property type="entry name" value="LeuC_type1"/>
    <property type="match status" value="1"/>
</dbReference>
<dbReference type="InterPro" id="IPR004430">
    <property type="entry name" value="3-IsopropMal_deHydase_lsu"/>
</dbReference>
<dbReference type="InterPro" id="IPR015931">
    <property type="entry name" value="Acnase/IPM_dHydase_lsu_aba_1/3"/>
</dbReference>
<dbReference type="InterPro" id="IPR001030">
    <property type="entry name" value="Acoase/IPM_deHydtase_lsu_aba"/>
</dbReference>
<dbReference type="InterPro" id="IPR018136">
    <property type="entry name" value="Aconitase_4Fe-4S_BS"/>
</dbReference>
<dbReference type="InterPro" id="IPR036008">
    <property type="entry name" value="Aconitase_4Fe-4S_dom"/>
</dbReference>
<dbReference type="InterPro" id="IPR050067">
    <property type="entry name" value="IPM_dehydratase_rel_enz"/>
</dbReference>
<dbReference type="InterPro" id="IPR033941">
    <property type="entry name" value="IPMI_cat"/>
</dbReference>
<dbReference type="NCBIfam" id="TIGR00170">
    <property type="entry name" value="leuC"/>
    <property type="match status" value="1"/>
</dbReference>
<dbReference type="NCBIfam" id="NF004016">
    <property type="entry name" value="PRK05478.1"/>
    <property type="match status" value="1"/>
</dbReference>
<dbReference type="NCBIfam" id="NF009116">
    <property type="entry name" value="PRK12466.1"/>
    <property type="match status" value="1"/>
</dbReference>
<dbReference type="PANTHER" id="PTHR43822:SF9">
    <property type="entry name" value="3-ISOPROPYLMALATE DEHYDRATASE"/>
    <property type="match status" value="1"/>
</dbReference>
<dbReference type="PANTHER" id="PTHR43822">
    <property type="entry name" value="HOMOACONITASE, MITOCHONDRIAL-RELATED"/>
    <property type="match status" value="1"/>
</dbReference>
<dbReference type="Pfam" id="PF00330">
    <property type="entry name" value="Aconitase"/>
    <property type="match status" value="1"/>
</dbReference>
<dbReference type="PRINTS" id="PR00415">
    <property type="entry name" value="ACONITASE"/>
</dbReference>
<dbReference type="SUPFAM" id="SSF53732">
    <property type="entry name" value="Aconitase iron-sulfur domain"/>
    <property type="match status" value="1"/>
</dbReference>
<dbReference type="PROSITE" id="PS00450">
    <property type="entry name" value="ACONITASE_1"/>
    <property type="match status" value="1"/>
</dbReference>
<dbReference type="PROSITE" id="PS01244">
    <property type="entry name" value="ACONITASE_2"/>
    <property type="match status" value="1"/>
</dbReference>
<protein>
    <recommendedName>
        <fullName evidence="1">3-isopropylmalate dehydratase large subunit</fullName>
        <ecNumber evidence="1">4.2.1.33</ecNumber>
    </recommendedName>
    <alternativeName>
        <fullName evidence="1">Alpha-IPM isomerase</fullName>
        <shortName evidence="1">IPMI</shortName>
    </alternativeName>
    <alternativeName>
        <fullName evidence="1">Isopropylmalate isomerase</fullName>
    </alternativeName>
</protein>